<name>LON_METST</name>
<protein>
    <recommendedName>
        <fullName evidence="1">Lon protease</fullName>
        <ecNumber evidence="1">3.4.21.53</ecNumber>
    </recommendedName>
    <alternativeName>
        <fullName evidence="1">ATP-dependent protease La</fullName>
    </alternativeName>
</protein>
<feature type="chain" id="PRO_0000396619" description="Lon protease">
    <location>
        <begin position="1"/>
        <end position="825"/>
    </location>
</feature>
<feature type="domain" description="Lon N-terminal" evidence="3">
    <location>
        <begin position="41"/>
        <end position="237"/>
    </location>
</feature>
<feature type="domain" description="Lon proteolytic" evidence="2">
    <location>
        <begin position="625"/>
        <end position="805"/>
    </location>
</feature>
<feature type="active site" evidence="1">
    <location>
        <position position="711"/>
    </location>
</feature>
<feature type="active site" evidence="1">
    <location>
        <position position="754"/>
    </location>
</feature>
<feature type="binding site" evidence="1">
    <location>
        <begin position="388"/>
        <end position="395"/>
    </location>
    <ligand>
        <name>ATP</name>
        <dbReference type="ChEBI" id="CHEBI:30616"/>
    </ligand>
</feature>
<accession>Q2NEP8</accession>
<organism>
    <name type="scientific">Methanosphaera stadtmanae (strain ATCC 43021 / DSM 3091 / JCM 11832 / MCB-3)</name>
    <dbReference type="NCBI Taxonomy" id="339860"/>
    <lineage>
        <taxon>Archaea</taxon>
        <taxon>Methanobacteriati</taxon>
        <taxon>Methanobacteriota</taxon>
        <taxon>Methanomada group</taxon>
        <taxon>Methanobacteria</taxon>
        <taxon>Methanobacteriales</taxon>
        <taxon>Methanobacteriaceae</taxon>
        <taxon>Methanosphaera</taxon>
    </lineage>
</organism>
<reference key="1">
    <citation type="journal article" date="2006" name="J. Bacteriol.">
        <title>The genome sequence of Methanosphaera stadtmanae reveals why this human intestinal archaeon is restricted to methanol and H2 for methane formation and ATP synthesis.</title>
        <authorList>
            <person name="Fricke W.F."/>
            <person name="Seedorf H."/>
            <person name="Henne A."/>
            <person name="Kruer M."/>
            <person name="Liesegang H."/>
            <person name="Hedderich R."/>
            <person name="Gottschalk G."/>
            <person name="Thauer R.K."/>
        </authorList>
    </citation>
    <scope>NUCLEOTIDE SEQUENCE [LARGE SCALE GENOMIC DNA]</scope>
    <source>
        <strain>ATCC 43021 / DSM 3091 / JCM 11832 / MCB-3</strain>
    </source>
</reference>
<comment type="function">
    <text evidence="1">ATP-dependent serine protease that mediates the selective degradation of mutant and abnormal proteins as well as certain short-lived regulatory proteins. Required for cellular homeostasis and for survival from DNA damage and developmental changes induced by stress. Degrades polypeptides processively to yield small peptide fragments that are 5 to 10 amino acids long. Binds to DNA in a double-stranded, site-specific manner.</text>
</comment>
<comment type="catalytic activity">
    <reaction evidence="1">
        <text>Hydrolysis of proteins in presence of ATP.</text>
        <dbReference type="EC" id="3.4.21.53"/>
    </reaction>
</comment>
<comment type="subunit">
    <text evidence="1">Homohexamer. Organized in a ring with a central cavity.</text>
</comment>
<comment type="subcellular location">
    <subcellularLocation>
        <location evidence="1">Cytoplasm</location>
    </subcellularLocation>
</comment>
<comment type="induction">
    <text evidence="1">By heat shock.</text>
</comment>
<comment type="similarity">
    <text evidence="1">Belongs to the peptidase S16 family.</text>
</comment>
<gene>
    <name evidence="1" type="primary">lon</name>
    <name type="ordered locus">Msp_1328</name>
</gene>
<keyword id="KW-0067">ATP-binding</keyword>
<keyword id="KW-0963">Cytoplasm</keyword>
<keyword id="KW-0378">Hydrolase</keyword>
<keyword id="KW-0547">Nucleotide-binding</keyword>
<keyword id="KW-0645">Protease</keyword>
<keyword id="KW-1185">Reference proteome</keyword>
<keyword id="KW-0720">Serine protease</keyword>
<keyword id="KW-0346">Stress response</keyword>
<dbReference type="EC" id="3.4.21.53" evidence="1"/>
<dbReference type="EMBL" id="CP000102">
    <property type="protein sequence ID" value="ABC57705.1"/>
    <property type="molecule type" value="Genomic_DNA"/>
</dbReference>
<dbReference type="SMR" id="Q2NEP8"/>
<dbReference type="STRING" id="339860.Msp_1328"/>
<dbReference type="KEGG" id="mst:Msp_1328"/>
<dbReference type="eggNOG" id="arCOG02161">
    <property type="taxonomic scope" value="Archaea"/>
</dbReference>
<dbReference type="HOGENOM" id="CLU_004109_4_3_2"/>
<dbReference type="OrthoDB" id="45425at2157"/>
<dbReference type="Proteomes" id="UP000001931">
    <property type="component" value="Chromosome"/>
</dbReference>
<dbReference type="GO" id="GO:0005737">
    <property type="term" value="C:cytoplasm"/>
    <property type="evidence" value="ECO:0007669"/>
    <property type="project" value="UniProtKB-SubCell"/>
</dbReference>
<dbReference type="GO" id="GO:0005524">
    <property type="term" value="F:ATP binding"/>
    <property type="evidence" value="ECO:0007669"/>
    <property type="project" value="UniProtKB-UniRule"/>
</dbReference>
<dbReference type="GO" id="GO:0016887">
    <property type="term" value="F:ATP hydrolysis activity"/>
    <property type="evidence" value="ECO:0007669"/>
    <property type="project" value="UniProtKB-UniRule"/>
</dbReference>
<dbReference type="GO" id="GO:0004176">
    <property type="term" value="F:ATP-dependent peptidase activity"/>
    <property type="evidence" value="ECO:0007669"/>
    <property type="project" value="UniProtKB-UniRule"/>
</dbReference>
<dbReference type="GO" id="GO:0043565">
    <property type="term" value="F:sequence-specific DNA binding"/>
    <property type="evidence" value="ECO:0007669"/>
    <property type="project" value="UniProtKB-UniRule"/>
</dbReference>
<dbReference type="GO" id="GO:0004252">
    <property type="term" value="F:serine-type endopeptidase activity"/>
    <property type="evidence" value="ECO:0007669"/>
    <property type="project" value="UniProtKB-UniRule"/>
</dbReference>
<dbReference type="GO" id="GO:0034605">
    <property type="term" value="P:cellular response to heat"/>
    <property type="evidence" value="ECO:0007669"/>
    <property type="project" value="UniProtKB-UniRule"/>
</dbReference>
<dbReference type="GO" id="GO:0006515">
    <property type="term" value="P:protein quality control for misfolded or incompletely synthesized proteins"/>
    <property type="evidence" value="ECO:0007669"/>
    <property type="project" value="UniProtKB-UniRule"/>
</dbReference>
<dbReference type="CDD" id="cd19500">
    <property type="entry name" value="RecA-like_Lon"/>
    <property type="match status" value="1"/>
</dbReference>
<dbReference type="FunFam" id="3.40.50.300:FF:000021">
    <property type="entry name" value="Lon protease homolog"/>
    <property type="match status" value="1"/>
</dbReference>
<dbReference type="Gene3D" id="1.10.8.60">
    <property type="match status" value="1"/>
</dbReference>
<dbReference type="Gene3D" id="1.20.5.5270">
    <property type="match status" value="1"/>
</dbReference>
<dbReference type="Gene3D" id="1.20.58.1480">
    <property type="match status" value="1"/>
</dbReference>
<dbReference type="Gene3D" id="3.30.230.10">
    <property type="match status" value="1"/>
</dbReference>
<dbReference type="Gene3D" id="2.30.130.40">
    <property type="entry name" value="LON domain-like"/>
    <property type="match status" value="1"/>
</dbReference>
<dbReference type="Gene3D" id="3.40.50.300">
    <property type="entry name" value="P-loop containing nucleotide triphosphate hydrolases"/>
    <property type="match status" value="1"/>
</dbReference>
<dbReference type="HAMAP" id="MF_01973">
    <property type="entry name" value="lon_bact"/>
    <property type="match status" value="1"/>
</dbReference>
<dbReference type="InterPro" id="IPR003593">
    <property type="entry name" value="AAA+_ATPase"/>
</dbReference>
<dbReference type="InterPro" id="IPR003959">
    <property type="entry name" value="ATPase_AAA_core"/>
</dbReference>
<dbReference type="InterPro" id="IPR027543">
    <property type="entry name" value="Lon_bac"/>
</dbReference>
<dbReference type="InterPro" id="IPR004815">
    <property type="entry name" value="Lon_bac/euk-typ"/>
</dbReference>
<dbReference type="InterPro" id="IPR054594">
    <property type="entry name" value="Lon_lid"/>
</dbReference>
<dbReference type="InterPro" id="IPR008269">
    <property type="entry name" value="Lon_proteolytic"/>
</dbReference>
<dbReference type="InterPro" id="IPR027065">
    <property type="entry name" value="Lon_Prtase"/>
</dbReference>
<dbReference type="InterPro" id="IPR003111">
    <property type="entry name" value="Lon_prtase_N"/>
</dbReference>
<dbReference type="InterPro" id="IPR046336">
    <property type="entry name" value="Lon_prtase_N_sf"/>
</dbReference>
<dbReference type="InterPro" id="IPR027417">
    <property type="entry name" value="P-loop_NTPase"/>
</dbReference>
<dbReference type="InterPro" id="IPR008268">
    <property type="entry name" value="Peptidase_S16_AS"/>
</dbReference>
<dbReference type="InterPro" id="IPR015947">
    <property type="entry name" value="PUA-like_sf"/>
</dbReference>
<dbReference type="InterPro" id="IPR020568">
    <property type="entry name" value="Ribosomal_Su5_D2-typ_SF"/>
</dbReference>
<dbReference type="InterPro" id="IPR014721">
    <property type="entry name" value="Ribsml_uS5_D2-typ_fold_subgr"/>
</dbReference>
<dbReference type="NCBIfam" id="TIGR00763">
    <property type="entry name" value="lon"/>
    <property type="match status" value="1"/>
</dbReference>
<dbReference type="PANTHER" id="PTHR10046">
    <property type="entry name" value="ATP DEPENDENT LON PROTEASE FAMILY MEMBER"/>
    <property type="match status" value="1"/>
</dbReference>
<dbReference type="Pfam" id="PF00004">
    <property type="entry name" value="AAA"/>
    <property type="match status" value="1"/>
</dbReference>
<dbReference type="Pfam" id="PF05362">
    <property type="entry name" value="Lon_C"/>
    <property type="match status" value="1"/>
</dbReference>
<dbReference type="Pfam" id="PF22667">
    <property type="entry name" value="Lon_lid"/>
    <property type="match status" value="1"/>
</dbReference>
<dbReference type="Pfam" id="PF02190">
    <property type="entry name" value="LON_substr_bdg"/>
    <property type="match status" value="1"/>
</dbReference>
<dbReference type="PIRSF" id="PIRSF001174">
    <property type="entry name" value="Lon_proteas"/>
    <property type="match status" value="1"/>
</dbReference>
<dbReference type="PRINTS" id="PR00830">
    <property type="entry name" value="ENDOLAPTASE"/>
</dbReference>
<dbReference type="SMART" id="SM00382">
    <property type="entry name" value="AAA"/>
    <property type="match status" value="1"/>
</dbReference>
<dbReference type="SMART" id="SM00464">
    <property type="entry name" value="LON"/>
    <property type="match status" value="1"/>
</dbReference>
<dbReference type="SUPFAM" id="SSF52540">
    <property type="entry name" value="P-loop containing nucleoside triphosphate hydrolases"/>
    <property type="match status" value="1"/>
</dbReference>
<dbReference type="SUPFAM" id="SSF88697">
    <property type="entry name" value="PUA domain-like"/>
    <property type="match status" value="1"/>
</dbReference>
<dbReference type="SUPFAM" id="SSF54211">
    <property type="entry name" value="Ribosomal protein S5 domain 2-like"/>
    <property type="match status" value="1"/>
</dbReference>
<dbReference type="PROSITE" id="PS51787">
    <property type="entry name" value="LON_N"/>
    <property type="match status" value="1"/>
</dbReference>
<dbReference type="PROSITE" id="PS51786">
    <property type="entry name" value="LON_PROTEOLYTIC"/>
    <property type="match status" value="1"/>
</dbReference>
<dbReference type="PROSITE" id="PS01046">
    <property type="entry name" value="LON_SER"/>
    <property type="match status" value="1"/>
</dbReference>
<proteinExistence type="inferred from homology"/>
<evidence type="ECO:0000255" key="1">
    <source>
        <dbReference type="HAMAP-Rule" id="MF_01973"/>
    </source>
</evidence>
<evidence type="ECO:0000255" key="2">
    <source>
        <dbReference type="PROSITE-ProRule" id="PRU01122"/>
    </source>
</evidence>
<evidence type="ECO:0000255" key="3">
    <source>
        <dbReference type="PROSITE-ProRule" id="PRU01123"/>
    </source>
</evidence>
<sequence>MTQEMENENLSFTQQLRKDGFIKDIDTNPTCFDDTDSQNQLPIIFIPNTILLPHTDITLNLDKQHTDNLLHTVDDNNHGIILTPKKLEEGNGNVEFYDVGVILEIKSLTEDKENELLPEEYVLELKVKDKVYVNKILKKDGFFHAQYKILPEENTLTEDEITELNKNIDETVLEIAKFLPNTDKYTRKILGKLDTQDKLAEVFPFLKVPINKKQELLELDSVKIRALKVIQLLLEQKDAIGIQMELAKKLNKKMNETHKNTLLREQMKLIQEELNMTDDTPAHKTYRERIKDAQLPKEVEEAALEEVTKLERQGQNNAEENIIRNYLDTILQLPWHKEENPTIDIVKAKKQLNDDHYGLKKVKTRIIQHLTVLKMKKDKQGSILLFVGPPGTGKTSLGKSIAAALERPYVRVSLGGVNDESEIRGHRRTYLGALPGRIINGMKKAGKTNPVFVLDEIDKMTESLNGNPTSALLEVLDPEQNDSFSDNYLEVPYDLSDVFFIGTANSLQDIPGPLRDRLEIIELDSYTNTEKHHIADEHLIKEVLLEHGLTEDDLKITYDAIDCLIEKYTRESGVRGLKREIAAIARYVTEKIVVDNVERPYVVDENMLYDILGHEKSHYDKVPDSNPPGVVTGLAWTPIGGDILFIEAVLLPGEEKLKLTGQLGDVMKESAQIAQSLIKSRLATVLKDSDIEKRDIHIHVPAGSIPKDGPSAGVTLLTTIASLVTNTPVDSTLAMTGEISLRGKVLPVGGIKEKVIAAHRSGIKTVLLPEENMKDLDDVPCEVKDDMTFKPMKTVDEVLYEALGLKLPENKPLNISIDEINKVTP</sequence>